<comment type="function">
    <text evidence="1">Sequence-specific DNA-binding transcription factor that binds palindromic sequences within promoters and may activate or repress the transcription of a subset of genes. Most probably regulates the expression of genes involved in the development of mesenchyme-derived craniofacial structures.</text>
</comment>
<comment type="subunit">
    <text evidence="2">Binds DNA as a homodimer; required for transcriptional activation.</text>
</comment>
<comment type="subcellular location">
    <subcellularLocation>
        <location evidence="1">Nucleus</location>
    </subcellularLocation>
</comment>
<comment type="domain">
    <text evidence="2">The OAR motif may negatively regulate DNA-binding and therefore transcriptional activity. It is found in the C-terminal transactivation domain that stimulates transcription.</text>
</comment>
<comment type="similarity">
    <text evidence="5">Belongs to the paired homeobox family.</text>
</comment>
<accession>Q91574</accession>
<protein>
    <recommendedName>
        <fullName evidence="5">ALX homeobox protein 1</fullName>
    </recommendedName>
    <alternativeName>
        <fullName evidence="2">Cartilage homeoprotein 1</fullName>
        <shortName evidence="2">CART-1</shortName>
    </alternativeName>
    <alternativeName>
        <fullName evidence="6">XCART1</fullName>
    </alternativeName>
</protein>
<name>ALX1_XENLA</name>
<organism>
    <name type="scientific">Xenopus laevis</name>
    <name type="common">African clawed frog</name>
    <dbReference type="NCBI Taxonomy" id="8355"/>
    <lineage>
        <taxon>Eukaryota</taxon>
        <taxon>Metazoa</taxon>
        <taxon>Chordata</taxon>
        <taxon>Craniata</taxon>
        <taxon>Vertebrata</taxon>
        <taxon>Euteleostomi</taxon>
        <taxon>Amphibia</taxon>
        <taxon>Batrachia</taxon>
        <taxon>Anura</taxon>
        <taxon>Pipoidea</taxon>
        <taxon>Pipidae</taxon>
        <taxon>Xenopodinae</taxon>
        <taxon>Xenopus</taxon>
        <taxon>Xenopus</taxon>
    </lineage>
</organism>
<proteinExistence type="evidence at transcript level"/>
<evidence type="ECO:0000250" key="1">
    <source>
        <dbReference type="UniProtKB" id="Q15699"/>
    </source>
</evidence>
<evidence type="ECO:0000250" key="2">
    <source>
        <dbReference type="UniProtKB" id="Q63087"/>
    </source>
</evidence>
<evidence type="ECO:0000255" key="3">
    <source>
        <dbReference type="PROSITE-ProRule" id="PRU00108"/>
    </source>
</evidence>
<evidence type="ECO:0000255" key="4">
    <source>
        <dbReference type="PROSITE-ProRule" id="PRU00138"/>
    </source>
</evidence>
<evidence type="ECO:0000305" key="5"/>
<evidence type="ECO:0000312" key="6">
    <source>
        <dbReference type="EMBL" id="AAA50368.1"/>
    </source>
</evidence>
<gene>
    <name evidence="1" type="primary">alx1</name>
    <name evidence="1" type="synonym">cart1</name>
</gene>
<reference key="1">
    <citation type="submission" date="1994-10" db="EMBL/GenBank/DDBJ databases">
        <authorList>
            <person name="Wright D.A."/>
            <person name="Allen L.H."/>
            <person name="de Crombrugghe B."/>
        </authorList>
    </citation>
    <scope>NUCLEOTIDE SEQUENCE [MRNA]</scope>
    <source>
        <tissue>Head</tissue>
    </source>
</reference>
<sequence>MDFLTDKFSLKNQPSKAGDFFMGGAGTLEHVMDSMDTESFYSKSPAVVAAAAGASKCVQQGFSAIHRAEHHVRMERASPCQENNANYGLAKVEGQTVHTELGRSMDTCCSLAVSPGKSMADKVELDELGDKCDSNVSSSKKRRHRTTFTSLQLEELEKVFQKTHYPDVYVREQLALRTELTEARVQVWFQNRRAKWRKRERYGQIQQAKSHFAATYDISVLPRADSYPQIQNNLWAGNPSGGSVVTSCMLPREPSSCMTPYSHSSRTDSPYTGFTNHQNQFSHMPLNIFFTESLLSGSANGHSFEAKPEFERRSSSIAVLRMKAKEHTANISWAM</sequence>
<dbReference type="EMBL" id="U15276">
    <property type="protein sequence ID" value="AAA50368.1"/>
    <property type="molecule type" value="mRNA"/>
</dbReference>
<dbReference type="RefSeq" id="NP_001079116.1">
    <property type="nucleotide sequence ID" value="NM_001085647.1"/>
</dbReference>
<dbReference type="SMR" id="Q91574"/>
<dbReference type="GeneID" id="373650"/>
<dbReference type="KEGG" id="xla:373650"/>
<dbReference type="AGR" id="Xenbase:XB-GENE-866461"/>
<dbReference type="CTD" id="373650"/>
<dbReference type="Xenbase" id="XB-GENE-866461">
    <property type="gene designation" value="alx1.L"/>
</dbReference>
<dbReference type="OrthoDB" id="6159439at2759"/>
<dbReference type="Proteomes" id="UP000186698">
    <property type="component" value="Chromosome 3L"/>
</dbReference>
<dbReference type="Bgee" id="373650">
    <property type="expression patterns" value="Expressed in neurula embryo and 5 other cell types or tissues"/>
</dbReference>
<dbReference type="GO" id="GO:0005634">
    <property type="term" value="C:nucleus"/>
    <property type="evidence" value="ECO:0000250"/>
    <property type="project" value="UniProtKB"/>
</dbReference>
<dbReference type="GO" id="GO:0001228">
    <property type="term" value="F:DNA-binding transcription activator activity, RNA polymerase II-specific"/>
    <property type="evidence" value="ECO:0000318"/>
    <property type="project" value="GO_Central"/>
</dbReference>
<dbReference type="GO" id="GO:0000977">
    <property type="term" value="F:RNA polymerase II transcription regulatory region sequence-specific DNA binding"/>
    <property type="evidence" value="ECO:0000318"/>
    <property type="project" value="GO_Central"/>
</dbReference>
<dbReference type="GO" id="GO:0048704">
    <property type="term" value="P:embryonic skeletal system morphogenesis"/>
    <property type="evidence" value="ECO:0000318"/>
    <property type="project" value="GO_Central"/>
</dbReference>
<dbReference type="GO" id="GO:0045892">
    <property type="term" value="P:negative regulation of DNA-templated transcription"/>
    <property type="evidence" value="ECO:0000318"/>
    <property type="project" value="GO_Central"/>
</dbReference>
<dbReference type="GO" id="GO:0045893">
    <property type="term" value="P:positive regulation of DNA-templated transcription"/>
    <property type="evidence" value="ECO:0000250"/>
    <property type="project" value="UniProtKB"/>
</dbReference>
<dbReference type="GO" id="GO:0010718">
    <property type="term" value="P:positive regulation of epithelial to mesenchymal transition"/>
    <property type="evidence" value="ECO:0000250"/>
    <property type="project" value="UniProtKB"/>
</dbReference>
<dbReference type="GO" id="GO:0045944">
    <property type="term" value="P:positive regulation of transcription by RNA polymerase II"/>
    <property type="evidence" value="ECO:0000318"/>
    <property type="project" value="GO_Central"/>
</dbReference>
<dbReference type="CDD" id="cd00086">
    <property type="entry name" value="homeodomain"/>
    <property type="match status" value="1"/>
</dbReference>
<dbReference type="FunFam" id="1.10.10.60:FF:000093">
    <property type="entry name" value="ALX homeobox protein 1"/>
    <property type="match status" value="1"/>
</dbReference>
<dbReference type="Gene3D" id="1.10.10.60">
    <property type="entry name" value="Homeodomain-like"/>
    <property type="match status" value="1"/>
</dbReference>
<dbReference type="InterPro" id="IPR001356">
    <property type="entry name" value="HD"/>
</dbReference>
<dbReference type="InterPro" id="IPR017970">
    <property type="entry name" value="Homeobox_CS"/>
</dbReference>
<dbReference type="InterPro" id="IPR009057">
    <property type="entry name" value="Homeodomain-like_sf"/>
</dbReference>
<dbReference type="InterPro" id="IPR003654">
    <property type="entry name" value="OAR_dom"/>
</dbReference>
<dbReference type="InterPro" id="IPR050649">
    <property type="entry name" value="Paired_Homeobox_TFs"/>
</dbReference>
<dbReference type="PANTHER" id="PTHR24329:SF359">
    <property type="entry name" value="ALX HOMEOBOX PROTEIN 1"/>
    <property type="match status" value="1"/>
</dbReference>
<dbReference type="PANTHER" id="PTHR24329">
    <property type="entry name" value="HOMEOBOX PROTEIN ARISTALESS"/>
    <property type="match status" value="1"/>
</dbReference>
<dbReference type="Pfam" id="PF00046">
    <property type="entry name" value="Homeodomain"/>
    <property type="match status" value="1"/>
</dbReference>
<dbReference type="Pfam" id="PF03826">
    <property type="entry name" value="OAR"/>
    <property type="match status" value="1"/>
</dbReference>
<dbReference type="SMART" id="SM00389">
    <property type="entry name" value="HOX"/>
    <property type="match status" value="1"/>
</dbReference>
<dbReference type="SUPFAM" id="SSF46689">
    <property type="entry name" value="Homeodomain-like"/>
    <property type="match status" value="1"/>
</dbReference>
<dbReference type="PROSITE" id="PS00027">
    <property type="entry name" value="HOMEOBOX_1"/>
    <property type="match status" value="1"/>
</dbReference>
<dbReference type="PROSITE" id="PS50071">
    <property type="entry name" value="HOMEOBOX_2"/>
    <property type="match status" value="1"/>
</dbReference>
<dbReference type="PROSITE" id="PS50803">
    <property type="entry name" value="OAR"/>
    <property type="match status" value="1"/>
</dbReference>
<keyword id="KW-0010">Activator</keyword>
<keyword id="KW-0217">Developmental protein</keyword>
<keyword id="KW-0238">DNA-binding</keyword>
<keyword id="KW-0371">Homeobox</keyword>
<keyword id="KW-0539">Nucleus</keyword>
<keyword id="KW-1185">Reference proteome</keyword>
<keyword id="KW-0678">Repressor</keyword>
<keyword id="KW-0804">Transcription</keyword>
<keyword id="KW-0805">Transcription regulation</keyword>
<feature type="chain" id="PRO_0000048858" description="ALX homeobox protein 1">
    <location>
        <begin position="1"/>
        <end position="335"/>
    </location>
</feature>
<feature type="DNA-binding region" description="Homeobox" evidence="3">
    <location>
        <begin position="141"/>
        <end position="200"/>
    </location>
</feature>
<feature type="region of interest" description="Transactivation domain" evidence="2">
    <location>
        <begin position="201"/>
        <end position="335"/>
    </location>
</feature>
<feature type="short sequence motif" description="OAR" evidence="4">
    <location>
        <begin position="315"/>
        <end position="328"/>
    </location>
</feature>